<keyword id="KW-0297">G-protein coupled receptor</keyword>
<keyword id="KW-0325">Glycoprotein</keyword>
<keyword id="KW-0472">Membrane</keyword>
<keyword id="KW-0675">Receptor</keyword>
<keyword id="KW-0716">Sensory transduction</keyword>
<keyword id="KW-0919">Taste</keyword>
<keyword id="KW-0807">Transducer</keyword>
<keyword id="KW-0812">Transmembrane</keyword>
<keyword id="KW-1133">Transmembrane helix</keyword>
<name>TA2R8_PONPY</name>
<organism>
    <name type="scientific">Pongo pygmaeus</name>
    <name type="common">Bornean orangutan</name>
    <dbReference type="NCBI Taxonomy" id="9600"/>
    <lineage>
        <taxon>Eukaryota</taxon>
        <taxon>Metazoa</taxon>
        <taxon>Chordata</taxon>
        <taxon>Craniata</taxon>
        <taxon>Vertebrata</taxon>
        <taxon>Euteleostomi</taxon>
        <taxon>Mammalia</taxon>
        <taxon>Eutheria</taxon>
        <taxon>Euarchontoglires</taxon>
        <taxon>Primates</taxon>
        <taxon>Haplorrhini</taxon>
        <taxon>Catarrhini</taxon>
        <taxon>Hominidae</taxon>
        <taxon>Pongo</taxon>
    </lineage>
</organism>
<feature type="chain" id="PRO_0000082231" description="Taste receptor type 2 member 8">
    <location>
        <begin position="1"/>
        <end position="309"/>
    </location>
</feature>
<feature type="topological domain" description="Extracellular" evidence="2">
    <location>
        <begin position="1"/>
        <end position="7"/>
    </location>
</feature>
<feature type="transmembrane region" description="Helical; Name=1" evidence="2">
    <location>
        <begin position="8"/>
        <end position="28"/>
    </location>
</feature>
<feature type="topological domain" description="Cytoplasmic" evidence="2">
    <location>
        <begin position="29"/>
        <end position="50"/>
    </location>
</feature>
<feature type="transmembrane region" description="Helical; Name=2" evidence="2">
    <location>
        <begin position="51"/>
        <end position="71"/>
    </location>
</feature>
<feature type="topological domain" description="Extracellular" evidence="2">
    <location>
        <begin position="72"/>
        <end position="82"/>
    </location>
</feature>
<feature type="transmembrane region" description="Helical; Name=3" evidence="2">
    <location>
        <begin position="83"/>
        <end position="103"/>
    </location>
</feature>
<feature type="topological domain" description="Cytoplasmic" evidence="2">
    <location>
        <begin position="104"/>
        <end position="131"/>
    </location>
</feature>
<feature type="transmembrane region" description="Helical; Name=4" evidence="2">
    <location>
        <begin position="132"/>
        <end position="152"/>
    </location>
</feature>
<feature type="topological domain" description="Extracellular" evidence="2">
    <location>
        <begin position="153"/>
        <end position="184"/>
    </location>
</feature>
<feature type="transmembrane region" description="Helical; Name=5" evidence="2">
    <location>
        <begin position="185"/>
        <end position="205"/>
    </location>
</feature>
<feature type="topological domain" description="Cytoplasmic" evidence="2">
    <location>
        <begin position="206"/>
        <end position="239"/>
    </location>
</feature>
<feature type="transmembrane region" description="Helical; Name=6" evidence="2">
    <location>
        <begin position="240"/>
        <end position="260"/>
    </location>
</feature>
<feature type="topological domain" description="Extracellular" evidence="2">
    <location>
        <begin position="261"/>
        <end position="266"/>
    </location>
</feature>
<feature type="transmembrane region" description="Helical; Name=7" evidence="2">
    <location>
        <begin position="267"/>
        <end position="287"/>
    </location>
</feature>
<feature type="topological domain" description="Cytoplasmic" evidence="2">
    <location>
        <begin position="288"/>
        <end position="309"/>
    </location>
</feature>
<feature type="glycosylation site" description="N-linked (GlcNAc...) asparagine" evidence="2">
    <location>
        <position position="167"/>
    </location>
</feature>
<gene>
    <name type="primary">TAS2R8</name>
</gene>
<proteinExistence type="inferred from homology"/>
<evidence type="ECO:0000250" key="1"/>
<evidence type="ECO:0000255" key="2"/>
<evidence type="ECO:0000305" key="3"/>
<sequence>MFSPADNIFIILITGEFILGILGNGYIALVNWIDWIKKKKISTTDYILTNLVISRICLISVIVVNGIVTVLYPDVYTKSKLQIAISTFWTFANYLNMWFTTCLNVFYFLKIANSSHPLFLWLKQKIDMVVRWILLGCFAISLLVSLIIAIVLSRDYRFHAIAKHKRNITEMFHVSKMLYFEPLTLFNLLAIVPFIVSLMSFFLLVRSLQRHTKQIKLYATGGRDPSTEAHVRAIKTMTSFIFFFFLYYITSLLVTFSYLMTKYKLAMAFGEIVAILYPSGHSFILIILNNKLRQASVRMLTCIKITCVI</sequence>
<comment type="function">
    <text evidence="1">Receptor that may play a role in the perception of bitterness and is gustducin-linked. May play a role in sensing the chemical composition of the gastrointestinal content. The activity of this receptor may stimulate alpha gustducin, mediate PLC-beta-2 activation and lead to the gating of TRPM5 (By similarity).</text>
</comment>
<comment type="subcellular location">
    <subcellularLocation>
        <location>Membrane</location>
        <topology>Multi-pass membrane protein</topology>
    </subcellularLocation>
</comment>
<comment type="miscellaneous">
    <text>Most taste cells may be activated by a limited number of bitter compounds; individual taste cells can discriminate among bitter stimuli.</text>
</comment>
<comment type="similarity">
    <text evidence="3">Belongs to the G-protein coupled receptor T2R family.</text>
</comment>
<protein>
    <recommendedName>
        <fullName>Taste receptor type 2 member 8</fullName>
        <shortName>T2R8</shortName>
    </recommendedName>
</protein>
<reference key="1">
    <citation type="journal article" date="2005" name="Mol. Biol. Evol.">
        <title>Evolution of bitter taste receptors in humans and apes.</title>
        <authorList>
            <person name="Fischer A."/>
            <person name="Gilad Y."/>
            <person name="Man O."/>
            <person name="Paeaebo S."/>
        </authorList>
    </citation>
    <scope>NUCLEOTIDE SEQUENCE [GENOMIC DNA]</scope>
</reference>
<dbReference type="EMBL" id="AY724985">
    <property type="protein sequence ID" value="AAU21171.1"/>
    <property type="molecule type" value="Genomic_DNA"/>
</dbReference>
<dbReference type="SMR" id="Q645U8"/>
<dbReference type="GlyCosmos" id="Q645U8">
    <property type="glycosylation" value="1 site, No reported glycans"/>
</dbReference>
<dbReference type="GO" id="GO:0005886">
    <property type="term" value="C:plasma membrane"/>
    <property type="evidence" value="ECO:0007669"/>
    <property type="project" value="UniProtKB-ARBA"/>
</dbReference>
<dbReference type="GO" id="GO:0033038">
    <property type="term" value="F:bitter taste receptor activity"/>
    <property type="evidence" value="ECO:0007669"/>
    <property type="project" value="InterPro"/>
</dbReference>
<dbReference type="GO" id="GO:0004930">
    <property type="term" value="F:G protein-coupled receptor activity"/>
    <property type="evidence" value="ECO:0007669"/>
    <property type="project" value="UniProtKB-KW"/>
</dbReference>
<dbReference type="CDD" id="cd15022">
    <property type="entry name" value="7tm_TAS2R8"/>
    <property type="match status" value="1"/>
</dbReference>
<dbReference type="FunFam" id="1.20.1070.10:FF:000042">
    <property type="entry name" value="Taste receptor type 2 member 7"/>
    <property type="match status" value="1"/>
</dbReference>
<dbReference type="Gene3D" id="1.20.1070.10">
    <property type="entry name" value="Rhodopsin 7-helix transmembrane proteins"/>
    <property type="match status" value="1"/>
</dbReference>
<dbReference type="InterPro" id="IPR017452">
    <property type="entry name" value="GPCR_Rhodpsn_7TM"/>
</dbReference>
<dbReference type="InterPro" id="IPR007960">
    <property type="entry name" value="TAS2R"/>
</dbReference>
<dbReference type="PANTHER" id="PTHR11394">
    <property type="entry name" value="TASTE RECEPTOR TYPE 2"/>
    <property type="match status" value="1"/>
</dbReference>
<dbReference type="PANTHER" id="PTHR11394:SF31">
    <property type="entry name" value="TASTE RECEPTOR TYPE 2 MEMBER 8"/>
    <property type="match status" value="1"/>
</dbReference>
<dbReference type="Pfam" id="PF05296">
    <property type="entry name" value="TAS2R"/>
    <property type="match status" value="1"/>
</dbReference>
<dbReference type="SUPFAM" id="SSF81321">
    <property type="entry name" value="Family A G protein-coupled receptor-like"/>
    <property type="match status" value="1"/>
</dbReference>
<dbReference type="PROSITE" id="PS50262">
    <property type="entry name" value="G_PROTEIN_RECEP_F1_2"/>
    <property type="match status" value="1"/>
</dbReference>
<accession>Q645U8</accession>